<dbReference type="EC" id="6.5.1.2" evidence="1"/>
<dbReference type="EMBL" id="AE016853">
    <property type="protein sequence ID" value="AAO57125.1"/>
    <property type="molecule type" value="Genomic_DNA"/>
</dbReference>
<dbReference type="RefSeq" id="NP_793430.1">
    <property type="nucleotide sequence ID" value="NC_004578.1"/>
</dbReference>
<dbReference type="RefSeq" id="WP_011104653.1">
    <property type="nucleotide sequence ID" value="NC_004578.1"/>
</dbReference>
<dbReference type="SMR" id="Q87YY6"/>
<dbReference type="STRING" id="223283.PSPTO_3656"/>
<dbReference type="GeneID" id="1185321"/>
<dbReference type="KEGG" id="pst:PSPTO_3656"/>
<dbReference type="PATRIC" id="fig|223283.9.peg.3746"/>
<dbReference type="eggNOG" id="COG0272">
    <property type="taxonomic scope" value="Bacteria"/>
</dbReference>
<dbReference type="HOGENOM" id="CLU_007764_2_1_6"/>
<dbReference type="OrthoDB" id="9759736at2"/>
<dbReference type="PhylomeDB" id="Q87YY6"/>
<dbReference type="Proteomes" id="UP000002515">
    <property type="component" value="Chromosome"/>
</dbReference>
<dbReference type="GO" id="GO:0005829">
    <property type="term" value="C:cytosol"/>
    <property type="evidence" value="ECO:0007669"/>
    <property type="project" value="TreeGrafter"/>
</dbReference>
<dbReference type="GO" id="GO:0003677">
    <property type="term" value="F:DNA binding"/>
    <property type="evidence" value="ECO:0007669"/>
    <property type="project" value="InterPro"/>
</dbReference>
<dbReference type="GO" id="GO:0003911">
    <property type="term" value="F:DNA ligase (NAD+) activity"/>
    <property type="evidence" value="ECO:0007669"/>
    <property type="project" value="UniProtKB-UniRule"/>
</dbReference>
<dbReference type="GO" id="GO:0046872">
    <property type="term" value="F:metal ion binding"/>
    <property type="evidence" value="ECO:0007669"/>
    <property type="project" value="UniProtKB-KW"/>
</dbReference>
<dbReference type="GO" id="GO:0006281">
    <property type="term" value="P:DNA repair"/>
    <property type="evidence" value="ECO:0007669"/>
    <property type="project" value="UniProtKB-KW"/>
</dbReference>
<dbReference type="GO" id="GO:0006260">
    <property type="term" value="P:DNA replication"/>
    <property type="evidence" value="ECO:0007669"/>
    <property type="project" value="UniProtKB-KW"/>
</dbReference>
<dbReference type="CDD" id="cd17748">
    <property type="entry name" value="BRCT_DNA_ligase_like"/>
    <property type="match status" value="1"/>
</dbReference>
<dbReference type="CDD" id="cd00114">
    <property type="entry name" value="LIGANc"/>
    <property type="match status" value="1"/>
</dbReference>
<dbReference type="FunFam" id="1.10.150.20:FF:000006">
    <property type="entry name" value="DNA ligase"/>
    <property type="match status" value="1"/>
</dbReference>
<dbReference type="FunFam" id="1.10.150.20:FF:000007">
    <property type="entry name" value="DNA ligase"/>
    <property type="match status" value="1"/>
</dbReference>
<dbReference type="FunFam" id="1.10.287.610:FF:000002">
    <property type="entry name" value="DNA ligase"/>
    <property type="match status" value="1"/>
</dbReference>
<dbReference type="FunFam" id="2.40.50.140:FF:000012">
    <property type="entry name" value="DNA ligase"/>
    <property type="match status" value="1"/>
</dbReference>
<dbReference type="FunFam" id="3.30.470.30:FF:000001">
    <property type="entry name" value="DNA ligase"/>
    <property type="match status" value="1"/>
</dbReference>
<dbReference type="Gene3D" id="6.20.10.30">
    <property type="match status" value="1"/>
</dbReference>
<dbReference type="Gene3D" id="1.10.150.20">
    <property type="entry name" value="5' to 3' exonuclease, C-terminal subdomain"/>
    <property type="match status" value="3"/>
</dbReference>
<dbReference type="Gene3D" id="3.40.50.10190">
    <property type="entry name" value="BRCT domain"/>
    <property type="match status" value="1"/>
</dbReference>
<dbReference type="Gene3D" id="3.30.470.30">
    <property type="entry name" value="DNA ligase/mRNA capping enzyme"/>
    <property type="match status" value="1"/>
</dbReference>
<dbReference type="Gene3D" id="1.10.287.610">
    <property type="entry name" value="Helix hairpin bin"/>
    <property type="match status" value="1"/>
</dbReference>
<dbReference type="Gene3D" id="2.40.50.140">
    <property type="entry name" value="Nucleic acid-binding proteins"/>
    <property type="match status" value="1"/>
</dbReference>
<dbReference type="HAMAP" id="MF_01588">
    <property type="entry name" value="DNA_ligase_A"/>
    <property type="match status" value="1"/>
</dbReference>
<dbReference type="InterPro" id="IPR001357">
    <property type="entry name" value="BRCT_dom"/>
</dbReference>
<dbReference type="InterPro" id="IPR036420">
    <property type="entry name" value="BRCT_dom_sf"/>
</dbReference>
<dbReference type="InterPro" id="IPR041663">
    <property type="entry name" value="DisA/LigA_HHH"/>
</dbReference>
<dbReference type="InterPro" id="IPR001679">
    <property type="entry name" value="DNA_ligase"/>
</dbReference>
<dbReference type="InterPro" id="IPR018239">
    <property type="entry name" value="DNA_ligase_AS"/>
</dbReference>
<dbReference type="InterPro" id="IPR033136">
    <property type="entry name" value="DNA_ligase_CS"/>
</dbReference>
<dbReference type="InterPro" id="IPR013839">
    <property type="entry name" value="DNAligase_adenylation"/>
</dbReference>
<dbReference type="InterPro" id="IPR013840">
    <property type="entry name" value="DNAligase_N"/>
</dbReference>
<dbReference type="InterPro" id="IPR003583">
    <property type="entry name" value="Hlx-hairpin-Hlx_DNA-bd_motif"/>
</dbReference>
<dbReference type="InterPro" id="IPR012340">
    <property type="entry name" value="NA-bd_OB-fold"/>
</dbReference>
<dbReference type="InterPro" id="IPR004150">
    <property type="entry name" value="NAD_DNA_ligase_OB"/>
</dbReference>
<dbReference type="InterPro" id="IPR010994">
    <property type="entry name" value="RuvA_2-like"/>
</dbReference>
<dbReference type="NCBIfam" id="TIGR00575">
    <property type="entry name" value="dnlj"/>
    <property type="match status" value="1"/>
</dbReference>
<dbReference type="NCBIfam" id="NF005932">
    <property type="entry name" value="PRK07956.1"/>
    <property type="match status" value="1"/>
</dbReference>
<dbReference type="PANTHER" id="PTHR23389">
    <property type="entry name" value="CHROMOSOME TRANSMISSION FIDELITY FACTOR 18"/>
    <property type="match status" value="1"/>
</dbReference>
<dbReference type="PANTHER" id="PTHR23389:SF9">
    <property type="entry name" value="DNA LIGASE"/>
    <property type="match status" value="1"/>
</dbReference>
<dbReference type="Pfam" id="PF00533">
    <property type="entry name" value="BRCT"/>
    <property type="match status" value="1"/>
</dbReference>
<dbReference type="Pfam" id="PF01653">
    <property type="entry name" value="DNA_ligase_aden"/>
    <property type="match status" value="1"/>
</dbReference>
<dbReference type="Pfam" id="PF03120">
    <property type="entry name" value="DNA_ligase_OB"/>
    <property type="match status" value="1"/>
</dbReference>
<dbReference type="Pfam" id="PF12826">
    <property type="entry name" value="HHH_2"/>
    <property type="match status" value="2"/>
</dbReference>
<dbReference type="Pfam" id="PF14520">
    <property type="entry name" value="HHH_5"/>
    <property type="match status" value="1"/>
</dbReference>
<dbReference type="Pfam" id="PF22745">
    <property type="entry name" value="Nlig-Ia"/>
    <property type="match status" value="1"/>
</dbReference>
<dbReference type="PIRSF" id="PIRSF001604">
    <property type="entry name" value="LigA"/>
    <property type="match status" value="1"/>
</dbReference>
<dbReference type="SMART" id="SM00292">
    <property type="entry name" value="BRCT"/>
    <property type="match status" value="1"/>
</dbReference>
<dbReference type="SMART" id="SM00278">
    <property type="entry name" value="HhH1"/>
    <property type="match status" value="3"/>
</dbReference>
<dbReference type="SMART" id="SM00532">
    <property type="entry name" value="LIGANc"/>
    <property type="match status" value="1"/>
</dbReference>
<dbReference type="SUPFAM" id="SSF52113">
    <property type="entry name" value="BRCT domain"/>
    <property type="match status" value="1"/>
</dbReference>
<dbReference type="SUPFAM" id="SSF56091">
    <property type="entry name" value="DNA ligase/mRNA capping enzyme, catalytic domain"/>
    <property type="match status" value="1"/>
</dbReference>
<dbReference type="SUPFAM" id="SSF50249">
    <property type="entry name" value="Nucleic acid-binding proteins"/>
    <property type="match status" value="1"/>
</dbReference>
<dbReference type="SUPFAM" id="SSF47781">
    <property type="entry name" value="RuvA domain 2-like"/>
    <property type="match status" value="2"/>
</dbReference>
<dbReference type="PROSITE" id="PS50172">
    <property type="entry name" value="BRCT"/>
    <property type="match status" value="1"/>
</dbReference>
<dbReference type="PROSITE" id="PS01055">
    <property type="entry name" value="DNA_LIGASE_N1"/>
    <property type="match status" value="1"/>
</dbReference>
<dbReference type="PROSITE" id="PS01056">
    <property type="entry name" value="DNA_LIGASE_N2"/>
    <property type="match status" value="1"/>
</dbReference>
<keyword id="KW-0227">DNA damage</keyword>
<keyword id="KW-0234">DNA repair</keyword>
<keyword id="KW-0235">DNA replication</keyword>
<keyword id="KW-0436">Ligase</keyword>
<keyword id="KW-0460">Magnesium</keyword>
<keyword id="KW-0464">Manganese</keyword>
<keyword id="KW-0479">Metal-binding</keyword>
<keyword id="KW-0520">NAD</keyword>
<keyword id="KW-1185">Reference proteome</keyword>
<keyword id="KW-0862">Zinc</keyword>
<organism>
    <name type="scientific">Pseudomonas syringae pv. tomato (strain ATCC BAA-871 / DC3000)</name>
    <dbReference type="NCBI Taxonomy" id="223283"/>
    <lineage>
        <taxon>Bacteria</taxon>
        <taxon>Pseudomonadati</taxon>
        <taxon>Pseudomonadota</taxon>
        <taxon>Gammaproteobacteria</taxon>
        <taxon>Pseudomonadales</taxon>
        <taxon>Pseudomonadaceae</taxon>
        <taxon>Pseudomonas</taxon>
    </lineage>
</organism>
<name>DNLJ_PSESM</name>
<reference key="1">
    <citation type="journal article" date="2003" name="Proc. Natl. Acad. Sci. U.S.A.">
        <title>The complete genome sequence of the Arabidopsis and tomato pathogen Pseudomonas syringae pv. tomato DC3000.</title>
        <authorList>
            <person name="Buell C.R."/>
            <person name="Joardar V."/>
            <person name="Lindeberg M."/>
            <person name="Selengut J."/>
            <person name="Paulsen I.T."/>
            <person name="Gwinn M.L."/>
            <person name="Dodson R.J."/>
            <person name="DeBoy R.T."/>
            <person name="Durkin A.S."/>
            <person name="Kolonay J.F."/>
            <person name="Madupu R."/>
            <person name="Daugherty S.C."/>
            <person name="Brinkac L.M."/>
            <person name="Beanan M.J."/>
            <person name="Haft D.H."/>
            <person name="Nelson W.C."/>
            <person name="Davidsen T.M."/>
            <person name="Zafar N."/>
            <person name="Zhou L."/>
            <person name="Liu J."/>
            <person name="Yuan Q."/>
            <person name="Khouri H.M."/>
            <person name="Fedorova N.B."/>
            <person name="Tran B."/>
            <person name="Russell D."/>
            <person name="Berry K.J."/>
            <person name="Utterback T.R."/>
            <person name="Van Aken S.E."/>
            <person name="Feldblyum T.V."/>
            <person name="D'Ascenzo M."/>
            <person name="Deng W.-L."/>
            <person name="Ramos A.R."/>
            <person name="Alfano J.R."/>
            <person name="Cartinhour S."/>
            <person name="Chatterjee A.K."/>
            <person name="Delaney T.P."/>
            <person name="Lazarowitz S.G."/>
            <person name="Martin G.B."/>
            <person name="Schneider D.J."/>
            <person name="Tang X."/>
            <person name="Bender C.L."/>
            <person name="White O."/>
            <person name="Fraser C.M."/>
            <person name="Collmer A."/>
        </authorList>
    </citation>
    <scope>NUCLEOTIDE SEQUENCE [LARGE SCALE GENOMIC DNA]</scope>
    <source>
        <strain>ATCC BAA-871 / DC3000</strain>
    </source>
</reference>
<comment type="function">
    <text evidence="1">DNA ligase that catalyzes the formation of phosphodiester linkages between 5'-phosphoryl and 3'-hydroxyl groups in double-stranded DNA using NAD as a coenzyme and as the energy source for the reaction. It is essential for DNA replication and repair of damaged DNA.</text>
</comment>
<comment type="catalytic activity">
    <reaction evidence="1">
        <text>NAD(+) + (deoxyribonucleotide)n-3'-hydroxyl + 5'-phospho-(deoxyribonucleotide)m = (deoxyribonucleotide)n+m + AMP + beta-nicotinamide D-nucleotide.</text>
        <dbReference type="EC" id="6.5.1.2"/>
    </reaction>
</comment>
<comment type="cofactor">
    <cofactor evidence="1">
        <name>Mg(2+)</name>
        <dbReference type="ChEBI" id="CHEBI:18420"/>
    </cofactor>
    <cofactor evidence="1">
        <name>Mn(2+)</name>
        <dbReference type="ChEBI" id="CHEBI:29035"/>
    </cofactor>
</comment>
<comment type="similarity">
    <text evidence="1">Belongs to the NAD-dependent DNA ligase family. LigA subfamily.</text>
</comment>
<evidence type="ECO:0000255" key="1">
    <source>
        <dbReference type="HAMAP-Rule" id="MF_01588"/>
    </source>
</evidence>
<protein>
    <recommendedName>
        <fullName evidence="1">DNA ligase</fullName>
        <ecNumber evidence="1">6.5.1.2</ecNumber>
    </recommendedName>
    <alternativeName>
        <fullName evidence="1">Polydeoxyribonucleotide synthase [NAD(+)]</fullName>
    </alternativeName>
</protein>
<accession>Q87YY6</accession>
<feature type="chain" id="PRO_0000313382" description="DNA ligase">
    <location>
        <begin position="1"/>
        <end position="787"/>
    </location>
</feature>
<feature type="domain" description="BRCT" evidence="1">
    <location>
        <begin position="703"/>
        <end position="787"/>
    </location>
</feature>
<feature type="active site" description="N6-AMP-lysine intermediate" evidence="1">
    <location>
        <position position="123"/>
    </location>
</feature>
<feature type="binding site" evidence="1">
    <location>
        <begin position="32"/>
        <end position="36"/>
    </location>
    <ligand>
        <name>NAD(+)</name>
        <dbReference type="ChEBI" id="CHEBI:57540"/>
    </ligand>
</feature>
<feature type="binding site" evidence="1">
    <location>
        <begin position="81"/>
        <end position="82"/>
    </location>
    <ligand>
        <name>NAD(+)</name>
        <dbReference type="ChEBI" id="CHEBI:57540"/>
    </ligand>
</feature>
<feature type="binding site" evidence="1">
    <location>
        <position position="121"/>
    </location>
    <ligand>
        <name>NAD(+)</name>
        <dbReference type="ChEBI" id="CHEBI:57540"/>
    </ligand>
</feature>
<feature type="binding site" evidence="1">
    <location>
        <position position="144"/>
    </location>
    <ligand>
        <name>NAD(+)</name>
        <dbReference type="ChEBI" id="CHEBI:57540"/>
    </ligand>
</feature>
<feature type="binding site" evidence="1">
    <location>
        <position position="181"/>
    </location>
    <ligand>
        <name>NAD(+)</name>
        <dbReference type="ChEBI" id="CHEBI:57540"/>
    </ligand>
</feature>
<feature type="binding site" evidence="1">
    <location>
        <position position="297"/>
    </location>
    <ligand>
        <name>NAD(+)</name>
        <dbReference type="ChEBI" id="CHEBI:57540"/>
    </ligand>
</feature>
<feature type="binding site" evidence="1">
    <location>
        <position position="321"/>
    </location>
    <ligand>
        <name>NAD(+)</name>
        <dbReference type="ChEBI" id="CHEBI:57540"/>
    </ligand>
</feature>
<feature type="binding site" evidence="1">
    <location>
        <position position="415"/>
    </location>
    <ligand>
        <name>Zn(2+)</name>
        <dbReference type="ChEBI" id="CHEBI:29105"/>
    </ligand>
</feature>
<feature type="binding site" evidence="1">
    <location>
        <position position="418"/>
    </location>
    <ligand>
        <name>Zn(2+)</name>
        <dbReference type="ChEBI" id="CHEBI:29105"/>
    </ligand>
</feature>
<feature type="binding site" evidence="1">
    <location>
        <position position="445"/>
    </location>
    <ligand>
        <name>Zn(2+)</name>
        <dbReference type="ChEBI" id="CHEBI:29105"/>
    </ligand>
</feature>
<feature type="binding site" evidence="1">
    <location>
        <position position="451"/>
    </location>
    <ligand>
        <name>Zn(2+)</name>
        <dbReference type="ChEBI" id="CHEBI:29105"/>
    </ligand>
</feature>
<gene>
    <name evidence="1" type="primary">ligA</name>
    <name type="ordered locus">PSPTO_3656</name>
</gene>
<sequence length="787" mass="86313">MKAAETRILELRAELDQHNYRYHVLDEPSIPDAEYDRLFHELKALEAENPHLVTPDSPTQRVGSAALSAFTQVRHEMAMLSLGNAFEENDLREFDRRVTEGLDLPAGDLFGEGGKVQYSCEPKLDGLAVSLLYRDGALVRGATRGDGTTGEDISVNVRTVRNIPLKLQGKGWPELLEVRGEVFMSKAGFERLNASQLEVGGKTFANPRNAAAGSLRQLDSKITANRPLEFCCYGLGQTSAEIADTHIGVLETLKKWGMPVSRELKLADGVEECLAYYRDIGERRLSLTYEIDGVVFKVNNLAAQRELGFRAREPRWAIAHKFPAMEELTELLDVEFQVGRTGAVTPVARLKPVKVAGVMVANATLHNMDEVARLGLMIGDTVIIRRAGDVIPQVVQVVVERRPETAKPVEVPQSCPVCGSHVERTQLIKRSKGKETVTEGAVYRCVGRLACGAQLKQAIIHYVSRRAMDIEGLGDKTIEQLVDEKLIGSPADLYKLKYEQIIDLEGFAEISSNKLLKAIADSRQPTLARFIYALGIPDVGEETAKVLARSLASLDRVKQALPEVLTYLPDVGLEVAYEIHSFFEDEHNRNVIDALLGECGLQLQDQGELGAEFAASTTLEGLIDKLHIPSVGPGAAQKLADRFGTLEAVISADWLDMRQTLPEKQAKSVRDFFDDNANAERARAIEAQLKDFGMHWRSEKKTVEGLPLAGQTWVLTGSLERMSRDVAKEKLESLGAKVSGSVSAKTHTVVAGPGAGSKLTKANELGLTVLDEEALLKRLTELGVAVD</sequence>
<proteinExistence type="inferred from homology"/>